<keyword id="KW-0175">Coiled coil</keyword>
<keyword id="KW-0472">Membrane</keyword>
<keyword id="KW-0496">Mitochondrion</keyword>
<keyword id="KW-1000">Mitochondrion outer membrane</keyword>
<keyword id="KW-0576">Peroxisome</keyword>
<keyword id="KW-0597">Phosphoprotein</keyword>
<keyword id="KW-1185">Reference proteome</keyword>
<keyword id="KW-0812">Transmembrane</keyword>
<keyword id="KW-1133">Transmembrane helix</keyword>
<comment type="function">
    <text evidence="1">Plays a role in mitochondrial and peroxisomal fission. Promotes the recruitment and association of the fission mediator dynamin-related protein 1 (DNM1L) to the mitochondrial surface (By similarity).</text>
</comment>
<comment type="subcellular location">
    <subcellularLocation>
        <location evidence="1">Mitochondrion outer membrane</location>
        <topology evidence="1">Single-pass type IV membrane protein</topology>
    </subcellularLocation>
    <subcellularLocation>
        <location evidence="1">Peroxisome</location>
    </subcellularLocation>
</comment>
<comment type="similarity">
    <text evidence="5">Belongs to the Tango11 family.</text>
</comment>
<evidence type="ECO:0000250" key="1"/>
<evidence type="ECO:0000255" key="2"/>
<evidence type="ECO:0000256" key="3">
    <source>
        <dbReference type="SAM" id="MobiDB-lite"/>
    </source>
</evidence>
<evidence type="ECO:0000269" key="4">
    <source>
    </source>
</evidence>
<evidence type="ECO:0000305" key="5"/>
<protein>
    <recommendedName>
        <fullName>Mitochondrial fission factor homolog B</fullName>
    </recommendedName>
</protein>
<name>MFFB_DANRE</name>
<sequence>MSGAAFPSPTAEIAEMNRIHYELEYTEGISQRMRIPEQLKVAPYGSEDQELPDHELLHTAMMHVPERIIVAGHSDDMPFPRDLDLIQSTPQESTLSLKTPPRVLTLSDRPLDFLEMEQTSSVSHPSEEVRTQTKTRRERSVSENAGVHHNGPLARNDSAFALATLDSTLEGGTDDMAVVDATSLRRQIVKLNRRLQLLEEENKERAKREMVMYSITVAFWLVNSWVWFRR</sequence>
<reference key="1">
    <citation type="submission" date="2003-08" db="EMBL/GenBank/DDBJ databases">
        <authorList>
            <consortium name="NIH - Zebrafish Gene Collection (ZGC) project"/>
        </authorList>
    </citation>
    <scope>NUCLEOTIDE SEQUENCE [LARGE SCALE MRNA]</scope>
    <source>
        <tissue>Kidney</tissue>
    </source>
</reference>
<reference key="2">
    <citation type="journal article" date="2008" name="J. Proteome Res.">
        <title>Online automated in vivo zebrafish phosphoproteomics: from large-scale analysis down to a single embryo.</title>
        <authorList>
            <person name="Lemeer S."/>
            <person name="Pinkse M.W.H."/>
            <person name="Mohammed S."/>
            <person name="van Breukelen B."/>
            <person name="den Hertog J."/>
            <person name="Slijper M."/>
            <person name="Heck A.J.R."/>
        </authorList>
    </citation>
    <scope>PHOSPHORYLATION [LARGE SCALE ANALYSIS] AT SER-142</scope>
    <scope>IDENTIFICATION BY MASS SPECTROMETRY</scope>
    <source>
        <tissue>Embryo</tissue>
    </source>
</reference>
<accession>Q7SZQ4</accession>
<feature type="chain" id="PRO_0000289189" description="Mitochondrial fission factor homolog B">
    <location>
        <begin position="1"/>
        <end position="230"/>
    </location>
</feature>
<feature type="topological domain" description="Cytoplasmic" evidence="2">
    <location>
        <begin position="1"/>
        <end position="210"/>
    </location>
</feature>
<feature type="transmembrane region" description="Helical; Anchor for type IV membrane protein" evidence="2">
    <location>
        <begin position="211"/>
        <end position="228"/>
    </location>
</feature>
<feature type="topological domain" description="Extracellular" evidence="2">
    <location>
        <begin position="229"/>
        <end position="230"/>
    </location>
</feature>
<feature type="region of interest" description="Disordered" evidence="3">
    <location>
        <begin position="117"/>
        <end position="153"/>
    </location>
</feature>
<feature type="coiled-coil region" evidence="2">
    <location>
        <begin position="179"/>
        <end position="210"/>
    </location>
</feature>
<feature type="modified residue" description="Phosphoserine" evidence="4">
    <location>
        <position position="142"/>
    </location>
</feature>
<dbReference type="EMBL" id="BC056301">
    <property type="protein sequence ID" value="AAH56301.1"/>
    <property type="molecule type" value="mRNA"/>
</dbReference>
<dbReference type="RefSeq" id="NP_956830.1">
    <property type="nucleotide sequence ID" value="NM_200536.1"/>
</dbReference>
<dbReference type="SMR" id="Q7SZQ4"/>
<dbReference type="FunCoup" id="Q7SZQ4">
    <property type="interactions" value="390"/>
</dbReference>
<dbReference type="STRING" id="7955.ENSDARP00000059194"/>
<dbReference type="iPTMnet" id="Q7SZQ4"/>
<dbReference type="Ensembl" id="ENSDART00000059195">
    <property type="protein sequence ID" value="ENSDARP00000059194"/>
    <property type="gene ID" value="ENSDARG00000053753"/>
</dbReference>
<dbReference type="GeneID" id="393508"/>
<dbReference type="KEGG" id="dre:393508"/>
<dbReference type="AGR" id="ZFIN:ZDB-GENE-040426-1510"/>
<dbReference type="CTD" id="393508"/>
<dbReference type="ZFIN" id="ZDB-GENE-040426-1510">
    <property type="gene designation" value="mffa"/>
</dbReference>
<dbReference type="eggNOG" id="ENOG502R96B">
    <property type="taxonomic scope" value="Eukaryota"/>
</dbReference>
<dbReference type="HOGENOM" id="CLU_066026_0_0_1"/>
<dbReference type="InParanoid" id="Q7SZQ4"/>
<dbReference type="OrthoDB" id="5986838at2759"/>
<dbReference type="PhylomeDB" id="Q7SZQ4"/>
<dbReference type="TreeFam" id="TF325506"/>
<dbReference type="PRO" id="PR:Q7SZQ4"/>
<dbReference type="Proteomes" id="UP000000437">
    <property type="component" value="Chromosome 15"/>
</dbReference>
<dbReference type="Bgee" id="ENSDARG00000053753">
    <property type="expression patterns" value="Expressed in brain and 24 other cell types or tissues"/>
</dbReference>
<dbReference type="ExpressionAtlas" id="Q7SZQ4">
    <property type="expression patterns" value="baseline"/>
</dbReference>
<dbReference type="GO" id="GO:0005741">
    <property type="term" value="C:mitochondrial outer membrane"/>
    <property type="evidence" value="ECO:0000318"/>
    <property type="project" value="GO_Central"/>
</dbReference>
<dbReference type="GO" id="GO:0005777">
    <property type="term" value="C:peroxisome"/>
    <property type="evidence" value="ECO:0000250"/>
    <property type="project" value="UniProtKB"/>
</dbReference>
<dbReference type="GO" id="GO:0042803">
    <property type="term" value="F:protein homodimerization activity"/>
    <property type="evidence" value="ECO:0000250"/>
    <property type="project" value="UniProtKB"/>
</dbReference>
<dbReference type="GO" id="GO:0000266">
    <property type="term" value="P:mitochondrial fission"/>
    <property type="evidence" value="ECO:0000250"/>
    <property type="project" value="UniProtKB"/>
</dbReference>
<dbReference type="GO" id="GO:0090141">
    <property type="term" value="P:positive regulation of mitochondrial fission"/>
    <property type="evidence" value="ECO:0000318"/>
    <property type="project" value="GO_Central"/>
</dbReference>
<dbReference type="GO" id="GO:0006626">
    <property type="term" value="P:protein targeting to mitochondrion"/>
    <property type="evidence" value="ECO:0000250"/>
    <property type="project" value="UniProtKB"/>
</dbReference>
<dbReference type="InterPro" id="IPR039433">
    <property type="entry name" value="Mff-like_dom"/>
</dbReference>
<dbReference type="InterPro" id="IPR008518">
    <property type="entry name" value="Mff/Tango-11"/>
</dbReference>
<dbReference type="PANTHER" id="PTHR16501:SF17">
    <property type="entry name" value="MITOCHONDRIAL FISSION FACTOR"/>
    <property type="match status" value="1"/>
</dbReference>
<dbReference type="PANTHER" id="PTHR16501">
    <property type="entry name" value="TRANSPORT AND GOLGI ORGANIZATION PROTEIN 11"/>
    <property type="match status" value="1"/>
</dbReference>
<dbReference type="Pfam" id="PF05644">
    <property type="entry name" value="Miff"/>
    <property type="match status" value="2"/>
</dbReference>
<proteinExistence type="evidence at protein level"/>
<organism>
    <name type="scientific">Danio rerio</name>
    <name type="common">Zebrafish</name>
    <name type="synonym">Brachydanio rerio</name>
    <dbReference type="NCBI Taxonomy" id="7955"/>
    <lineage>
        <taxon>Eukaryota</taxon>
        <taxon>Metazoa</taxon>
        <taxon>Chordata</taxon>
        <taxon>Craniata</taxon>
        <taxon>Vertebrata</taxon>
        <taxon>Euteleostomi</taxon>
        <taxon>Actinopterygii</taxon>
        <taxon>Neopterygii</taxon>
        <taxon>Teleostei</taxon>
        <taxon>Ostariophysi</taxon>
        <taxon>Cypriniformes</taxon>
        <taxon>Danionidae</taxon>
        <taxon>Danioninae</taxon>
        <taxon>Danio</taxon>
    </lineage>
</organism>
<gene>
    <name type="ORF">zgc:66022</name>
</gene>